<dbReference type="EC" id="3.1.2.28" evidence="1"/>
<dbReference type="EMBL" id="CP000806">
    <property type="protein sequence ID" value="ACB51182.1"/>
    <property type="molecule type" value="Genomic_DNA"/>
</dbReference>
<dbReference type="RefSeq" id="WP_009545645.1">
    <property type="nucleotide sequence ID" value="NC_010546.1"/>
</dbReference>
<dbReference type="SMR" id="B1WZN0"/>
<dbReference type="STRING" id="43989.cce_1832"/>
<dbReference type="KEGG" id="cyt:cce_1832"/>
<dbReference type="eggNOG" id="COG0824">
    <property type="taxonomic scope" value="Bacteria"/>
</dbReference>
<dbReference type="HOGENOM" id="CLU_101141_5_3_3"/>
<dbReference type="OrthoDB" id="9800856at2"/>
<dbReference type="UniPathway" id="UPA00995"/>
<dbReference type="UniPathway" id="UPA01057">
    <property type="reaction ID" value="UER01033"/>
</dbReference>
<dbReference type="Proteomes" id="UP000001203">
    <property type="component" value="Chromosome circular"/>
</dbReference>
<dbReference type="GO" id="GO:0061522">
    <property type="term" value="F:1,4-dihydroxy-2-naphthoyl-CoA thioesterase activity"/>
    <property type="evidence" value="ECO:0007669"/>
    <property type="project" value="UniProtKB-EC"/>
</dbReference>
<dbReference type="GO" id="GO:0047617">
    <property type="term" value="F:fatty acyl-CoA hydrolase activity"/>
    <property type="evidence" value="ECO:0007669"/>
    <property type="project" value="TreeGrafter"/>
</dbReference>
<dbReference type="GO" id="GO:0042372">
    <property type="term" value="P:phylloquinone biosynthetic process"/>
    <property type="evidence" value="ECO:0007669"/>
    <property type="project" value="UniProtKB-UniRule"/>
</dbReference>
<dbReference type="CDD" id="cd00586">
    <property type="entry name" value="4HBT"/>
    <property type="match status" value="1"/>
</dbReference>
<dbReference type="Gene3D" id="3.10.129.10">
    <property type="entry name" value="Hotdog Thioesterase"/>
    <property type="match status" value="1"/>
</dbReference>
<dbReference type="HAMAP" id="MF_02101">
    <property type="entry name" value="DHNA_CoA_hydrolase"/>
    <property type="match status" value="1"/>
</dbReference>
<dbReference type="InterPro" id="IPR050563">
    <property type="entry name" value="4-hydroxybenzoyl-CoA_TE"/>
</dbReference>
<dbReference type="InterPro" id="IPR022829">
    <property type="entry name" value="DHNA_CoA_hydrolase"/>
</dbReference>
<dbReference type="InterPro" id="IPR029069">
    <property type="entry name" value="HotDog_dom_sf"/>
</dbReference>
<dbReference type="PANTHER" id="PTHR31793">
    <property type="entry name" value="4-HYDROXYBENZOYL-COA THIOESTERASE FAMILY MEMBER"/>
    <property type="match status" value="1"/>
</dbReference>
<dbReference type="PANTHER" id="PTHR31793:SF37">
    <property type="entry name" value="ACYL-COA THIOESTER HYDROLASE YBGC"/>
    <property type="match status" value="1"/>
</dbReference>
<dbReference type="Pfam" id="PF13279">
    <property type="entry name" value="4HBT_2"/>
    <property type="match status" value="1"/>
</dbReference>
<dbReference type="SUPFAM" id="SSF54637">
    <property type="entry name" value="Thioesterase/thiol ester dehydrase-isomerase"/>
    <property type="match status" value="1"/>
</dbReference>
<keyword id="KW-0378">Hydrolase</keyword>
<keyword id="KW-1185">Reference proteome</keyword>
<comment type="function">
    <text evidence="1">Catalyzes the hydrolysis of 1,4-dihydroxy-2-naphthoyl-CoA (DHNA-CoA) to 1,4-dihydroxy-2-naphthoate (DHNA), a reaction involved in phylloquinone (vitamin K1) biosynthesis.</text>
</comment>
<comment type="catalytic activity">
    <reaction evidence="1">
        <text>1,4-dihydroxy-2-naphthoyl-CoA + H2O = 1,4-dihydroxy-2-naphthoate + CoA + H(+)</text>
        <dbReference type="Rhea" id="RHEA:26309"/>
        <dbReference type="ChEBI" id="CHEBI:11173"/>
        <dbReference type="ChEBI" id="CHEBI:15377"/>
        <dbReference type="ChEBI" id="CHEBI:15378"/>
        <dbReference type="ChEBI" id="CHEBI:57287"/>
        <dbReference type="ChEBI" id="CHEBI:58897"/>
        <dbReference type="EC" id="3.1.2.28"/>
    </reaction>
</comment>
<comment type="pathway">
    <text evidence="1">Cofactor biosynthesis; phylloquinone biosynthesis.</text>
</comment>
<comment type="pathway">
    <text evidence="1">Quinol/quinone metabolism; 1,4-dihydroxy-2-naphthoate biosynthesis; 1,4-dihydroxy-2-naphthoate from chorismate: step 7/7.</text>
</comment>
<comment type="similarity">
    <text evidence="1">Belongs to the 4-hydroxybenzoyl-CoA thioesterase family. DHNA-CoA hydrolase subfamily.</text>
</comment>
<evidence type="ECO:0000255" key="1">
    <source>
        <dbReference type="HAMAP-Rule" id="MF_02101"/>
    </source>
</evidence>
<protein>
    <recommendedName>
        <fullName evidence="1">1,4-dihydroxy-2-naphthoyl-CoA hydrolase</fullName>
        <shortName evidence="1">DHNA-CoA hydrolase</shortName>
        <ecNumber evidence="1">3.1.2.28</ecNumber>
    </recommendedName>
    <alternativeName>
        <fullName evidence="1">DHNA-CoA thioesterase</fullName>
    </alternativeName>
</protein>
<proteinExistence type="inferred from homology"/>
<accession>B1WZN0</accession>
<feature type="chain" id="PRO_0000377010" description="1,4-dihydroxy-2-naphthoyl-CoA hydrolase">
    <location>
        <begin position="1"/>
        <end position="137"/>
    </location>
</feature>
<feature type="active site" evidence="1">
    <location>
        <position position="13"/>
    </location>
</feature>
<organism>
    <name type="scientific">Crocosphaera subtropica (strain ATCC 51142 / BH68)</name>
    <name type="common">Cyanothece sp. (strain ATCC 51142)</name>
    <dbReference type="NCBI Taxonomy" id="43989"/>
    <lineage>
        <taxon>Bacteria</taxon>
        <taxon>Bacillati</taxon>
        <taxon>Cyanobacteriota</taxon>
        <taxon>Cyanophyceae</taxon>
        <taxon>Oscillatoriophycideae</taxon>
        <taxon>Chroococcales</taxon>
        <taxon>Aphanothecaceae</taxon>
        <taxon>Crocosphaera</taxon>
        <taxon>Crocosphaera subtropica</taxon>
    </lineage>
</organism>
<name>DNCH_CROS5</name>
<reference key="1">
    <citation type="journal article" date="2008" name="Proc. Natl. Acad. Sci. U.S.A.">
        <title>The genome of Cyanothece 51142, a unicellular diazotrophic cyanobacterium important in the marine nitrogen cycle.</title>
        <authorList>
            <person name="Welsh E.A."/>
            <person name="Liberton M."/>
            <person name="Stoeckel J."/>
            <person name="Loh T."/>
            <person name="Elvitigala T."/>
            <person name="Wang C."/>
            <person name="Wollam A."/>
            <person name="Fulton R.S."/>
            <person name="Clifton S.W."/>
            <person name="Jacobs J.M."/>
            <person name="Aurora R."/>
            <person name="Ghosh B.K."/>
            <person name="Sherman L.A."/>
            <person name="Smith R.D."/>
            <person name="Wilson R.K."/>
            <person name="Pakrasi H.B."/>
        </authorList>
    </citation>
    <scope>NUCLEOTIDE SEQUENCE [LARGE SCALE GENOMIC DNA]</scope>
    <source>
        <strain>ATCC 51142 / BH68</strain>
    </source>
</reference>
<gene>
    <name type="ordered locus">cce_1832</name>
</gene>
<sequence>MTYNRTIHFSDTDAAGVVYFAAFLSICHEAYENSLQVAGIDLKTFFTSSDIAIPIVHADIDFYQPLFCGDRIQINLTPTQLNETEFEIKYQVFNENNLDKLIAKATTKHVSINPKIRQRTSLSLSITQWLRSNQDDC</sequence>